<sequence>MTSDVIANMITSIRNANLRKIKVIELPATKITKSIGKILLQEGFIDNLREREENNKNFLILTLRSQRRKHKASITTIRRISKPGLRIYSNHQEIPKVLGGIGIVILSTSQGIMSDRQARQNRIGGEILCYIW</sequence>
<proteinExistence type="inferred from homology"/>
<comment type="function">
    <text evidence="1">One of the primary rRNA binding proteins, it binds directly to 16S rRNA central domain where it helps coordinate assembly of the platform of the 30S subunit.</text>
</comment>
<comment type="subunit">
    <text evidence="1">Part of the 30S ribosomal subunit.</text>
</comment>
<comment type="subcellular location">
    <subcellularLocation>
        <location>Plastid</location>
        <location>Chloroplast</location>
    </subcellularLocation>
</comment>
<comment type="similarity">
    <text evidence="2">Belongs to the universal ribosomal protein uS8 family.</text>
</comment>
<reference key="1">
    <citation type="journal article" date="2002" name="Proc. Natl. Acad. Sci. U.S.A.">
        <title>The chloroplast and mitochondrial genome sequences of the charophyte Chaetosphaeridium globosum: insights into the timing of the events that restructured organelle DNAs within the green algal lineage that led to land plants.</title>
        <authorList>
            <person name="Turmel M."/>
            <person name="Otis C."/>
            <person name="Lemieux C."/>
        </authorList>
    </citation>
    <scope>NUCLEOTIDE SEQUENCE [LARGE SCALE GENOMIC DNA]</scope>
    <source>
        <strain>M1311</strain>
    </source>
</reference>
<accession>P59032</accession>
<keyword id="KW-0150">Chloroplast</keyword>
<keyword id="KW-0934">Plastid</keyword>
<keyword id="KW-0687">Ribonucleoprotein</keyword>
<keyword id="KW-0689">Ribosomal protein</keyword>
<keyword id="KW-0694">RNA-binding</keyword>
<keyword id="KW-0699">rRNA-binding</keyword>
<evidence type="ECO:0000250" key="1"/>
<evidence type="ECO:0000305" key="2"/>
<dbReference type="EMBL" id="AF494278">
    <property type="protein sequence ID" value="AAM96579.1"/>
    <property type="molecule type" value="Genomic_DNA"/>
</dbReference>
<dbReference type="RefSeq" id="NP_683836.1">
    <property type="nucleotide sequence ID" value="NC_004115.1"/>
</dbReference>
<dbReference type="SMR" id="P59032"/>
<dbReference type="GeneID" id="860735"/>
<dbReference type="GO" id="GO:0009507">
    <property type="term" value="C:chloroplast"/>
    <property type="evidence" value="ECO:0007669"/>
    <property type="project" value="UniProtKB-SubCell"/>
</dbReference>
<dbReference type="GO" id="GO:1990904">
    <property type="term" value="C:ribonucleoprotein complex"/>
    <property type="evidence" value="ECO:0007669"/>
    <property type="project" value="UniProtKB-KW"/>
</dbReference>
<dbReference type="GO" id="GO:0005840">
    <property type="term" value="C:ribosome"/>
    <property type="evidence" value="ECO:0007669"/>
    <property type="project" value="UniProtKB-KW"/>
</dbReference>
<dbReference type="GO" id="GO:0019843">
    <property type="term" value="F:rRNA binding"/>
    <property type="evidence" value="ECO:0007669"/>
    <property type="project" value="UniProtKB-UniRule"/>
</dbReference>
<dbReference type="GO" id="GO:0003735">
    <property type="term" value="F:structural constituent of ribosome"/>
    <property type="evidence" value="ECO:0007669"/>
    <property type="project" value="InterPro"/>
</dbReference>
<dbReference type="GO" id="GO:0006412">
    <property type="term" value="P:translation"/>
    <property type="evidence" value="ECO:0007669"/>
    <property type="project" value="UniProtKB-UniRule"/>
</dbReference>
<dbReference type="FunFam" id="3.30.1490.10:FF:000001">
    <property type="entry name" value="30S ribosomal protein S8"/>
    <property type="match status" value="1"/>
</dbReference>
<dbReference type="Gene3D" id="3.30.1370.30">
    <property type="match status" value="1"/>
</dbReference>
<dbReference type="Gene3D" id="3.30.1490.10">
    <property type="match status" value="1"/>
</dbReference>
<dbReference type="HAMAP" id="MF_01302_B">
    <property type="entry name" value="Ribosomal_uS8_B"/>
    <property type="match status" value="1"/>
</dbReference>
<dbReference type="InterPro" id="IPR000630">
    <property type="entry name" value="Ribosomal_uS8"/>
</dbReference>
<dbReference type="InterPro" id="IPR047863">
    <property type="entry name" value="Ribosomal_uS8_CS"/>
</dbReference>
<dbReference type="InterPro" id="IPR035987">
    <property type="entry name" value="Ribosomal_uS8_sf"/>
</dbReference>
<dbReference type="NCBIfam" id="NF001109">
    <property type="entry name" value="PRK00136.1"/>
    <property type="match status" value="1"/>
</dbReference>
<dbReference type="PANTHER" id="PTHR11758">
    <property type="entry name" value="40S RIBOSOMAL PROTEIN S15A"/>
    <property type="match status" value="1"/>
</dbReference>
<dbReference type="Pfam" id="PF00410">
    <property type="entry name" value="Ribosomal_S8"/>
    <property type="match status" value="1"/>
</dbReference>
<dbReference type="SUPFAM" id="SSF56047">
    <property type="entry name" value="Ribosomal protein S8"/>
    <property type="match status" value="1"/>
</dbReference>
<dbReference type="PROSITE" id="PS00053">
    <property type="entry name" value="RIBOSOMAL_S8"/>
    <property type="match status" value="1"/>
</dbReference>
<organism>
    <name type="scientific">Chaetosphaeridium globosum</name>
    <name type="common">Charophycean green alga</name>
    <name type="synonym">Herposteiron globosum</name>
    <dbReference type="NCBI Taxonomy" id="96477"/>
    <lineage>
        <taxon>Eukaryota</taxon>
        <taxon>Viridiplantae</taxon>
        <taxon>Streptophyta</taxon>
        <taxon>Coleochaetophyceae</taxon>
        <taxon>Coleochaetales</taxon>
        <taxon>Chaetosphaeridiaceae</taxon>
        <taxon>Chaetosphaeridium</taxon>
    </lineage>
</organism>
<protein>
    <recommendedName>
        <fullName evidence="2">Small ribosomal subunit protein uS8c</fullName>
    </recommendedName>
    <alternativeName>
        <fullName>30S ribosomal protein S8, chloroplastic</fullName>
    </alternativeName>
</protein>
<name>RR8_CHAGL</name>
<feature type="chain" id="PRO_0000126565" description="Small ribosomal subunit protein uS8c">
    <location>
        <begin position="1"/>
        <end position="132"/>
    </location>
</feature>
<geneLocation type="chloroplast"/>
<gene>
    <name type="primary">rps8</name>
</gene>